<comment type="function">
    <text evidence="3">Thrombin-like enzyme that induces the formation of fibrin clot. Cleaves the Aalpha-chain of fibrinogen (FGA) with higher activity than the Bbeta-chain (FGB). Induces platelet aggregation in both platelet-rich plasma and in washed platelet preparations. This aggregation is strongly inhibited by preincubation of the enzyme with PMSF.</text>
</comment>
<comment type="activity regulation">
    <text evidence="3">Inhibited by PMSF, disodium-EDTA, S(Dm) and soybean trypsin inhibitor (SBTI). SBTI and S(Dm) (the anti-hemorrhagic protein) acts as a non-competitive inhibitors that decrease the enzymatic activity.</text>
</comment>
<comment type="biophysicochemical properties">
    <kinetics>
        <KM evidence="3">0.23 M for N-alpha-benzoyl-DL-arginine-p-nitroanilide</KM>
        <Vmax evidence="3">0.052 nmol/min/mg enzyme toward N-alpha-benzoyl-DL-arginine-p-nitroanilide</Vmax>
    </kinetics>
    <phDependence>
        <text evidence="3">Optimum pH is 8.0.</text>
    </phDependence>
    <temperatureDependence>
        <text evidence="3">Optimum temperature is 38-40 degrees Celsius.</text>
    </temperatureDependence>
</comment>
<comment type="subunit">
    <text evidence="1">Monomer.</text>
</comment>
<comment type="subcellular location">
    <subcellularLocation>
        <location>Secreted</location>
    </subcellularLocation>
</comment>
<comment type="tissue specificity">
    <text>Expressed by the venom gland.</text>
</comment>
<comment type="PTM">
    <text>Homologous thrombin-like enzymes are N-glycosylated. This enzyme does not contain the consensus glycosylation sites, suggesting it is not glycosylated.</text>
</comment>
<comment type="mass spectrometry" mass="33332.5" method="MALDI" evidence="3"/>
<comment type="miscellaneous">
    <text evidence="4">Negative results: has no activity on the gamma-chain of fibrinogen (FGG). In vivo, does not induce a significant edema activity in mice (PubMed:19931298).</text>
</comment>
<comment type="similarity">
    <text evidence="2">Belongs to the peptidase S1 family. Snake venom subfamily.</text>
</comment>
<accession>P0DJE9</accession>
<name>VSP1_BOTMA</name>
<protein>
    <recommendedName>
        <fullName>Thrombin-like enzyme TLBm</fullName>
        <shortName>SVTLE TLBm</shortName>
        <ecNumber>3.4.21.-</ecNumber>
    </recommendedName>
    <alternativeName>
        <fullName>Fibrinogen-clotting enzyme</fullName>
    </alternativeName>
    <alternativeName>
        <fullName>Snake venom serine protease</fullName>
        <shortName>SVSP</shortName>
    </alternativeName>
</protein>
<keyword id="KW-1204">Blood coagulation cascade activating toxin</keyword>
<keyword id="KW-0903">Direct protein sequencing</keyword>
<keyword id="KW-1015">Disulfide bond</keyword>
<keyword id="KW-1199">Hemostasis impairing toxin</keyword>
<keyword id="KW-0378">Hydrolase</keyword>
<keyword id="KW-1202">Platelet aggregation activating toxin</keyword>
<keyword id="KW-0645">Protease</keyword>
<keyword id="KW-0964">Secreted</keyword>
<keyword id="KW-0720">Serine protease</keyword>
<keyword id="KW-0800">Toxin</keyword>
<feature type="chain" id="PRO_0000416019" description="Thrombin-like enzyme TLBm">
    <location>
        <begin position="1"/>
        <end position="285"/>
    </location>
</feature>
<feature type="domain" description="Peptidase S1" evidence="2">
    <location>
        <begin position="1"/>
        <end position="273"/>
    </location>
</feature>
<feature type="active site" description="Charge relay system" evidence="1">
    <location>
        <position position="45"/>
    </location>
</feature>
<feature type="active site" description="Charge relay system" evidence="1">
    <location>
        <position position="113"/>
    </location>
</feature>
<feature type="active site" description="Charge relay system" evidence="1">
    <location>
        <position position="228"/>
    </location>
</feature>
<feature type="disulfide bond" evidence="2">
    <location>
        <begin position="7"/>
        <end position="181"/>
    </location>
</feature>
<feature type="disulfide bond" evidence="2">
    <location>
        <begin position="30"/>
        <end position="46"/>
    </location>
</feature>
<feature type="disulfide bond" evidence="2">
    <location>
        <begin position="94"/>
        <end position="284"/>
    </location>
</feature>
<feature type="disulfide bond" evidence="2">
    <location>
        <begin position="156"/>
        <end position="234"/>
    </location>
</feature>
<feature type="disulfide bond" evidence="2">
    <location>
        <begin position="192"/>
        <end position="209"/>
    </location>
</feature>
<feature type="disulfide bond" evidence="2">
    <location>
        <begin position="224"/>
        <end position="249"/>
    </location>
</feature>
<dbReference type="EC" id="3.4.21.-"/>
<dbReference type="SMR" id="P0DJE9"/>
<dbReference type="GO" id="GO:0005576">
    <property type="term" value="C:extracellular region"/>
    <property type="evidence" value="ECO:0000314"/>
    <property type="project" value="UniProtKB"/>
</dbReference>
<dbReference type="GO" id="GO:0030141">
    <property type="term" value="C:secretory granule"/>
    <property type="evidence" value="ECO:0007669"/>
    <property type="project" value="TreeGrafter"/>
</dbReference>
<dbReference type="GO" id="GO:0004252">
    <property type="term" value="F:serine-type endopeptidase activity"/>
    <property type="evidence" value="ECO:0000314"/>
    <property type="project" value="UniProtKB"/>
</dbReference>
<dbReference type="GO" id="GO:0090729">
    <property type="term" value="F:toxin activity"/>
    <property type="evidence" value="ECO:0007669"/>
    <property type="project" value="UniProtKB-KW"/>
</dbReference>
<dbReference type="GO" id="GO:0006508">
    <property type="term" value="P:proteolysis"/>
    <property type="evidence" value="ECO:0007669"/>
    <property type="project" value="UniProtKB-KW"/>
</dbReference>
<dbReference type="GO" id="GO:0044485">
    <property type="term" value="P:venom-mediated fibrinogenolysis in another organism"/>
    <property type="evidence" value="ECO:0000314"/>
    <property type="project" value="UniProtKB"/>
</dbReference>
<dbReference type="GO" id="GO:0044478">
    <property type="term" value="P:venom-mediated platelet aggregation"/>
    <property type="evidence" value="ECO:0000314"/>
    <property type="project" value="UniProtKB"/>
</dbReference>
<dbReference type="CDD" id="cd00190">
    <property type="entry name" value="Tryp_SPc"/>
    <property type="match status" value="1"/>
</dbReference>
<dbReference type="Gene3D" id="2.40.10.10">
    <property type="entry name" value="Trypsin-like serine proteases"/>
    <property type="match status" value="2"/>
</dbReference>
<dbReference type="InterPro" id="IPR009003">
    <property type="entry name" value="Peptidase_S1_PA"/>
</dbReference>
<dbReference type="InterPro" id="IPR043504">
    <property type="entry name" value="Peptidase_S1_PA_chymotrypsin"/>
</dbReference>
<dbReference type="InterPro" id="IPR001314">
    <property type="entry name" value="Peptidase_S1A"/>
</dbReference>
<dbReference type="InterPro" id="IPR001254">
    <property type="entry name" value="Trypsin_dom"/>
</dbReference>
<dbReference type="InterPro" id="IPR018114">
    <property type="entry name" value="TRYPSIN_HIS"/>
</dbReference>
<dbReference type="InterPro" id="IPR033116">
    <property type="entry name" value="TRYPSIN_SER"/>
</dbReference>
<dbReference type="PANTHER" id="PTHR24271:SF47">
    <property type="entry name" value="KALLIKREIN-1"/>
    <property type="match status" value="1"/>
</dbReference>
<dbReference type="PANTHER" id="PTHR24271">
    <property type="entry name" value="KALLIKREIN-RELATED"/>
    <property type="match status" value="1"/>
</dbReference>
<dbReference type="Pfam" id="PF00089">
    <property type="entry name" value="Trypsin"/>
    <property type="match status" value="1"/>
</dbReference>
<dbReference type="PRINTS" id="PR00722">
    <property type="entry name" value="CHYMOTRYPSIN"/>
</dbReference>
<dbReference type="SMART" id="SM00020">
    <property type="entry name" value="Tryp_SPc"/>
    <property type="match status" value="1"/>
</dbReference>
<dbReference type="SUPFAM" id="SSF50494">
    <property type="entry name" value="Trypsin-like serine proteases"/>
    <property type="match status" value="1"/>
</dbReference>
<dbReference type="PROSITE" id="PS50240">
    <property type="entry name" value="TRYPSIN_DOM"/>
    <property type="match status" value="1"/>
</dbReference>
<dbReference type="PROSITE" id="PS00134">
    <property type="entry name" value="TRYPSIN_HIS"/>
    <property type="match status" value="1"/>
</dbReference>
<dbReference type="PROSITE" id="PS00135">
    <property type="entry name" value="TRYPSIN_SER"/>
    <property type="match status" value="1"/>
</dbReference>
<organism>
    <name type="scientific">Bothrops marajoensis</name>
    <name type="common">Marajo lancehead</name>
    <dbReference type="NCBI Taxonomy" id="157554"/>
    <lineage>
        <taxon>Eukaryota</taxon>
        <taxon>Metazoa</taxon>
        <taxon>Chordata</taxon>
        <taxon>Craniata</taxon>
        <taxon>Vertebrata</taxon>
        <taxon>Euteleostomi</taxon>
        <taxon>Lepidosauria</taxon>
        <taxon>Squamata</taxon>
        <taxon>Bifurcata</taxon>
        <taxon>Unidentata</taxon>
        <taxon>Episquamata</taxon>
        <taxon>Toxicofera</taxon>
        <taxon>Serpentes</taxon>
        <taxon>Colubroidea</taxon>
        <taxon>Viperidae</taxon>
        <taxon>Crotalinae</taxon>
        <taxon>Bothrops</taxon>
    </lineage>
</organism>
<sequence length="285" mass="33241">VIGGDECNINESPFLAFLYSQLLSSRRYFCGMTLINQEWVLTAAHCNLYPDRKDMNWWLLIKLGKHSGSTRRWVANYDEQVRYWPKEKFIWWYCPNKKKDVINNYVWVWWDKDILLWELWMLIRLNRPVKYSEHIAPLSLPSSPPSAKWWHVGSVCRIMGWGQITETWWNSEDTLPDVPRCANINLFNYEVCRAYNQRWWRGLPAKTLCAGDLEGIIRGGWDTCVGDSGGPLICDGQYQGIAYWGSKPCAEPDEPAAYSKVFDHLDWSQSVIAGGTWWRGDDTCP</sequence>
<proteinExistence type="evidence at protein level"/>
<evidence type="ECO:0000250" key="1"/>
<evidence type="ECO:0000255" key="2">
    <source>
        <dbReference type="PROSITE-ProRule" id="PRU00274"/>
    </source>
</evidence>
<evidence type="ECO:0000269" key="3">
    <source>
    </source>
</evidence>
<evidence type="ECO:0000305" key="4">
    <source>
    </source>
</evidence>
<reference key="1">
    <citation type="journal article" date="2010" name="Toxicon">
        <title>Isolation and characterization of a new serine protease with thrombin-like activity (TLBm) from the venom of the snake Bothrops marajoensis.</title>
        <authorList>
            <person name="Vilca-Quispe A."/>
            <person name="Ponce-Soto L.A."/>
            <person name="Winck F.V."/>
            <person name="Marangoni S."/>
        </authorList>
    </citation>
    <scope>PROTEIN SEQUENCE</scope>
    <scope>FUNCTION</scope>
    <scope>ACTIVITY REGULATION</scope>
    <scope>BIOPHYSICOCHEMICAL PROPERTIES</scope>
    <scope>MASS SPECTROMETRY</scope>
    <source>
        <tissue>Venom</tissue>
    </source>
</reference>